<accession>Q9PBD1</accession>
<dbReference type="EC" id="3.5.4.19"/>
<dbReference type="EC" id="3.6.1.31"/>
<dbReference type="EMBL" id="AE003849">
    <property type="protein sequence ID" value="AAF85012.1"/>
    <property type="molecule type" value="Genomic_DNA"/>
</dbReference>
<dbReference type="PIR" id="H82584">
    <property type="entry name" value="H82584"/>
</dbReference>
<dbReference type="RefSeq" id="WP_010894661.1">
    <property type="nucleotide sequence ID" value="NC_002488.3"/>
</dbReference>
<dbReference type="SMR" id="Q9PBD1"/>
<dbReference type="STRING" id="160492.XF_2213"/>
<dbReference type="KEGG" id="xfa:XF_2213"/>
<dbReference type="PATRIC" id="fig|160492.11.peg.2355"/>
<dbReference type="eggNOG" id="COG0139">
    <property type="taxonomic scope" value="Bacteria"/>
</dbReference>
<dbReference type="eggNOG" id="COG0140">
    <property type="taxonomic scope" value="Bacteria"/>
</dbReference>
<dbReference type="HOGENOM" id="CLU_048577_3_1_6"/>
<dbReference type="UniPathway" id="UPA00031">
    <property type="reaction ID" value="UER00007"/>
</dbReference>
<dbReference type="UniPathway" id="UPA00031">
    <property type="reaction ID" value="UER00008"/>
</dbReference>
<dbReference type="Proteomes" id="UP000000812">
    <property type="component" value="Chromosome"/>
</dbReference>
<dbReference type="GO" id="GO:0005737">
    <property type="term" value="C:cytoplasm"/>
    <property type="evidence" value="ECO:0007669"/>
    <property type="project" value="UniProtKB-SubCell"/>
</dbReference>
<dbReference type="GO" id="GO:0005524">
    <property type="term" value="F:ATP binding"/>
    <property type="evidence" value="ECO:0007669"/>
    <property type="project" value="UniProtKB-KW"/>
</dbReference>
<dbReference type="GO" id="GO:0004635">
    <property type="term" value="F:phosphoribosyl-AMP cyclohydrolase activity"/>
    <property type="evidence" value="ECO:0007669"/>
    <property type="project" value="UniProtKB-UniRule"/>
</dbReference>
<dbReference type="GO" id="GO:0004636">
    <property type="term" value="F:phosphoribosyl-ATP diphosphatase activity"/>
    <property type="evidence" value="ECO:0007669"/>
    <property type="project" value="UniProtKB-UniRule"/>
</dbReference>
<dbReference type="GO" id="GO:0000105">
    <property type="term" value="P:L-histidine biosynthetic process"/>
    <property type="evidence" value="ECO:0007669"/>
    <property type="project" value="UniProtKB-UniRule"/>
</dbReference>
<dbReference type="CDD" id="cd11534">
    <property type="entry name" value="NTP-PPase_HisIE_like"/>
    <property type="match status" value="1"/>
</dbReference>
<dbReference type="FunFam" id="3.10.20.810:FF:000001">
    <property type="entry name" value="Histidine biosynthesis bifunctional protein HisIE"/>
    <property type="match status" value="1"/>
</dbReference>
<dbReference type="Gene3D" id="1.10.287.1080">
    <property type="entry name" value="MazG-like"/>
    <property type="match status" value="1"/>
</dbReference>
<dbReference type="Gene3D" id="3.10.20.810">
    <property type="entry name" value="Phosphoribosyl-AMP cyclohydrolase"/>
    <property type="match status" value="1"/>
</dbReference>
<dbReference type="HAMAP" id="MF_01020">
    <property type="entry name" value="HisE"/>
    <property type="match status" value="1"/>
</dbReference>
<dbReference type="HAMAP" id="MF_01019">
    <property type="entry name" value="HisIE"/>
    <property type="match status" value="1"/>
</dbReference>
<dbReference type="InterPro" id="IPR023019">
    <property type="entry name" value="His_synth_HisIE"/>
</dbReference>
<dbReference type="InterPro" id="IPR008179">
    <property type="entry name" value="HisE"/>
</dbReference>
<dbReference type="InterPro" id="IPR021130">
    <property type="entry name" value="PRib-ATP_PPHydrolase-like"/>
</dbReference>
<dbReference type="InterPro" id="IPR002496">
    <property type="entry name" value="PRib_AMP_CycHydrolase_dom"/>
</dbReference>
<dbReference type="InterPro" id="IPR038019">
    <property type="entry name" value="PRib_AMP_CycHydrolase_sf"/>
</dbReference>
<dbReference type="NCBIfam" id="TIGR03188">
    <property type="entry name" value="histidine_hisI"/>
    <property type="match status" value="1"/>
</dbReference>
<dbReference type="NCBIfam" id="NF002747">
    <property type="entry name" value="PRK02759.1"/>
    <property type="match status" value="1"/>
</dbReference>
<dbReference type="PANTHER" id="PTHR42945">
    <property type="entry name" value="HISTIDINE BIOSYNTHESIS BIFUNCTIONAL PROTEIN"/>
    <property type="match status" value="1"/>
</dbReference>
<dbReference type="PANTHER" id="PTHR42945:SF9">
    <property type="entry name" value="HISTIDINE BIOSYNTHESIS BIFUNCTIONAL PROTEIN HISIE"/>
    <property type="match status" value="1"/>
</dbReference>
<dbReference type="Pfam" id="PF01502">
    <property type="entry name" value="PRA-CH"/>
    <property type="match status" value="1"/>
</dbReference>
<dbReference type="Pfam" id="PF01503">
    <property type="entry name" value="PRA-PH"/>
    <property type="match status" value="1"/>
</dbReference>
<dbReference type="SUPFAM" id="SSF101386">
    <property type="entry name" value="all-alpha NTP pyrophosphatases"/>
    <property type="match status" value="1"/>
</dbReference>
<dbReference type="SUPFAM" id="SSF141734">
    <property type="entry name" value="HisI-like"/>
    <property type="match status" value="1"/>
</dbReference>
<organism>
    <name type="scientific">Xylella fastidiosa (strain 9a5c)</name>
    <dbReference type="NCBI Taxonomy" id="160492"/>
    <lineage>
        <taxon>Bacteria</taxon>
        <taxon>Pseudomonadati</taxon>
        <taxon>Pseudomonadota</taxon>
        <taxon>Gammaproteobacteria</taxon>
        <taxon>Lysobacterales</taxon>
        <taxon>Lysobacteraceae</taxon>
        <taxon>Xylella</taxon>
    </lineage>
</organism>
<gene>
    <name type="primary">hisI</name>
    <name type="synonym">hisIE</name>
    <name type="ordered locus">XF_2213</name>
</gene>
<reference key="1">
    <citation type="journal article" date="2000" name="Nature">
        <title>The genome sequence of the plant pathogen Xylella fastidiosa.</title>
        <authorList>
            <person name="Simpson A.J.G."/>
            <person name="Reinach F.C."/>
            <person name="Arruda P."/>
            <person name="Abreu F.A."/>
            <person name="Acencio M."/>
            <person name="Alvarenga R."/>
            <person name="Alves L.M.C."/>
            <person name="Araya J.E."/>
            <person name="Baia G.S."/>
            <person name="Baptista C.S."/>
            <person name="Barros M.H."/>
            <person name="Bonaccorsi E.D."/>
            <person name="Bordin S."/>
            <person name="Bove J.M."/>
            <person name="Briones M.R.S."/>
            <person name="Bueno M.R.P."/>
            <person name="Camargo A.A."/>
            <person name="Camargo L.E.A."/>
            <person name="Carraro D.M."/>
            <person name="Carrer H."/>
            <person name="Colauto N.B."/>
            <person name="Colombo C."/>
            <person name="Costa F.F."/>
            <person name="Costa M.C.R."/>
            <person name="Costa-Neto C.M."/>
            <person name="Coutinho L.L."/>
            <person name="Cristofani M."/>
            <person name="Dias-Neto E."/>
            <person name="Docena C."/>
            <person name="El-Dorry H."/>
            <person name="Facincani A.P."/>
            <person name="Ferreira A.J.S."/>
            <person name="Ferreira V.C.A."/>
            <person name="Ferro J.A."/>
            <person name="Fraga J.S."/>
            <person name="Franca S.C."/>
            <person name="Franco M.C."/>
            <person name="Frohme M."/>
            <person name="Furlan L.R."/>
            <person name="Garnier M."/>
            <person name="Goldman G.H."/>
            <person name="Goldman M.H.S."/>
            <person name="Gomes S.L."/>
            <person name="Gruber A."/>
            <person name="Ho P.L."/>
            <person name="Hoheisel J.D."/>
            <person name="Junqueira M.L."/>
            <person name="Kemper E.L."/>
            <person name="Kitajima J.P."/>
            <person name="Krieger J.E."/>
            <person name="Kuramae E.E."/>
            <person name="Laigret F."/>
            <person name="Lambais M.R."/>
            <person name="Leite L.C.C."/>
            <person name="Lemos E.G.M."/>
            <person name="Lemos M.V.F."/>
            <person name="Lopes S.A."/>
            <person name="Lopes C.R."/>
            <person name="Machado J.A."/>
            <person name="Machado M.A."/>
            <person name="Madeira A.M.B.N."/>
            <person name="Madeira H.M.F."/>
            <person name="Marino C.L."/>
            <person name="Marques M.V."/>
            <person name="Martins E.A.L."/>
            <person name="Martins E.M.F."/>
            <person name="Matsukuma A.Y."/>
            <person name="Menck C.F.M."/>
            <person name="Miracca E.C."/>
            <person name="Miyaki C.Y."/>
            <person name="Monteiro-Vitorello C.B."/>
            <person name="Moon D.H."/>
            <person name="Nagai M.A."/>
            <person name="Nascimento A.L.T.O."/>
            <person name="Netto L.E.S."/>
            <person name="Nhani A. Jr."/>
            <person name="Nobrega F.G."/>
            <person name="Nunes L.R."/>
            <person name="Oliveira M.A."/>
            <person name="de Oliveira M.C."/>
            <person name="de Oliveira R.C."/>
            <person name="Palmieri D.A."/>
            <person name="Paris A."/>
            <person name="Peixoto B.R."/>
            <person name="Pereira G.A.G."/>
            <person name="Pereira H.A. Jr."/>
            <person name="Pesquero J.B."/>
            <person name="Quaggio R.B."/>
            <person name="Roberto P.G."/>
            <person name="Rodrigues V."/>
            <person name="de Rosa A.J.M."/>
            <person name="de Rosa V.E. Jr."/>
            <person name="de Sa R.G."/>
            <person name="Santelli R.V."/>
            <person name="Sawasaki H.E."/>
            <person name="da Silva A.C.R."/>
            <person name="da Silva A.M."/>
            <person name="da Silva F.R."/>
            <person name="Silva W.A. Jr."/>
            <person name="da Silveira J.F."/>
            <person name="Silvestri M.L.Z."/>
            <person name="Siqueira W.J."/>
            <person name="de Souza A.A."/>
            <person name="de Souza A.P."/>
            <person name="Terenzi M.F."/>
            <person name="Truffi D."/>
            <person name="Tsai S.M."/>
            <person name="Tsuhako M.H."/>
            <person name="Vallada H."/>
            <person name="Van Sluys M.A."/>
            <person name="Verjovski-Almeida S."/>
            <person name="Vettore A.L."/>
            <person name="Zago M.A."/>
            <person name="Zatz M."/>
            <person name="Meidanis J."/>
            <person name="Setubal J.C."/>
        </authorList>
    </citation>
    <scope>NUCLEOTIDE SEQUENCE [LARGE SCALE GENOMIC DNA]</scope>
    <source>
        <strain>9a5c</strain>
    </source>
</reference>
<sequence>MCNEPATSDVALPDLDWAKGDGLLPVIVQDADTLRVLMLGYMNSQALEVTQRSRLVTFYSRSKQRLWTKGERSGHVLHLVAIDADCDADTLLVQARPRGPTCHLGRTSCFPAAPGQFLGALDALVAERERERPQDSYTTALFEQGVRRIAQKVGEEGVETALAGVVQVDDALLDESADLLYHLIVLLRARGLSLADAVTVLEARHR</sequence>
<name>HIS2_XYLFA</name>
<evidence type="ECO:0000250" key="1"/>
<evidence type="ECO:0000305" key="2"/>
<comment type="catalytic activity">
    <reaction>
        <text>1-(5-phospho-beta-D-ribosyl)-ATP + H2O = 1-(5-phospho-beta-D-ribosyl)-5'-AMP + diphosphate + H(+)</text>
        <dbReference type="Rhea" id="RHEA:22828"/>
        <dbReference type="ChEBI" id="CHEBI:15377"/>
        <dbReference type="ChEBI" id="CHEBI:15378"/>
        <dbReference type="ChEBI" id="CHEBI:33019"/>
        <dbReference type="ChEBI" id="CHEBI:59457"/>
        <dbReference type="ChEBI" id="CHEBI:73183"/>
        <dbReference type="EC" id="3.6.1.31"/>
    </reaction>
</comment>
<comment type="catalytic activity">
    <reaction>
        <text>1-(5-phospho-beta-D-ribosyl)-5'-AMP + H2O = 1-(5-phospho-beta-D-ribosyl)-5-[(5-phospho-beta-D-ribosylamino)methylideneamino]imidazole-4-carboxamide</text>
        <dbReference type="Rhea" id="RHEA:20049"/>
        <dbReference type="ChEBI" id="CHEBI:15377"/>
        <dbReference type="ChEBI" id="CHEBI:58435"/>
        <dbReference type="ChEBI" id="CHEBI:59457"/>
        <dbReference type="EC" id="3.5.4.19"/>
    </reaction>
</comment>
<comment type="pathway">
    <text>Amino-acid biosynthesis; L-histidine biosynthesis; L-histidine from 5-phospho-alpha-D-ribose 1-diphosphate: step 2/9.</text>
</comment>
<comment type="pathway">
    <text>Amino-acid biosynthesis; L-histidine biosynthesis; L-histidine from 5-phospho-alpha-D-ribose 1-diphosphate: step 3/9.</text>
</comment>
<comment type="subcellular location">
    <subcellularLocation>
        <location evidence="1">Cytoplasm</location>
    </subcellularLocation>
</comment>
<comment type="similarity">
    <text evidence="2">In the N-terminal section; belongs to the PRA-CH family.</text>
</comment>
<comment type="similarity">
    <text evidence="2">In the C-terminal section; belongs to the PRA-PH family.</text>
</comment>
<feature type="chain" id="PRO_0000136452" description="Histidine biosynthesis bifunctional protein HisIE">
    <location>
        <begin position="1"/>
        <end position="206"/>
    </location>
</feature>
<feature type="region of interest" description="Phosphoribosyl-AMP cyclohydrolase">
    <location>
        <begin position="1"/>
        <end position="117"/>
    </location>
</feature>
<feature type="region of interest" description="Phosphoribosyl-ATP pyrophosphohydrolase">
    <location>
        <begin position="118"/>
        <end position="206"/>
    </location>
</feature>
<proteinExistence type="inferred from homology"/>
<protein>
    <recommendedName>
        <fullName>Histidine biosynthesis bifunctional protein HisIE</fullName>
    </recommendedName>
    <domain>
        <recommendedName>
            <fullName>Phosphoribosyl-AMP cyclohydrolase</fullName>
            <shortName>PRA-CH</shortName>
            <ecNumber>3.5.4.19</ecNumber>
        </recommendedName>
    </domain>
    <domain>
        <recommendedName>
            <fullName>Phosphoribosyl-ATP pyrophosphatase</fullName>
            <shortName>PRA-PH</shortName>
            <ecNumber>3.6.1.31</ecNumber>
        </recommendedName>
    </domain>
</protein>
<keyword id="KW-0028">Amino-acid biosynthesis</keyword>
<keyword id="KW-0067">ATP-binding</keyword>
<keyword id="KW-0963">Cytoplasm</keyword>
<keyword id="KW-0368">Histidine biosynthesis</keyword>
<keyword id="KW-0378">Hydrolase</keyword>
<keyword id="KW-0511">Multifunctional enzyme</keyword>
<keyword id="KW-0547">Nucleotide-binding</keyword>